<dbReference type="EMBL" id="GG692434">
    <property type="protein sequence ID" value="EER37707.1"/>
    <property type="molecule type" value="Genomic_DNA"/>
</dbReference>
<dbReference type="STRING" id="544712.C6HQ96"/>
<dbReference type="VEuPathDB" id="FungiDB:HCDG_08377"/>
<dbReference type="eggNOG" id="KOG4020">
    <property type="taxonomic scope" value="Eukaryota"/>
</dbReference>
<dbReference type="HOGENOM" id="CLU_067152_1_0_1"/>
<dbReference type="OMA" id="DFVMPVT"/>
<dbReference type="OrthoDB" id="12439at299071"/>
<dbReference type="Proteomes" id="UP000002624">
    <property type="component" value="Unassembled WGS sequence"/>
</dbReference>
<dbReference type="GO" id="GO:0005758">
    <property type="term" value="C:mitochondrial intermembrane space"/>
    <property type="evidence" value="ECO:0007669"/>
    <property type="project" value="UniProtKB-SubCell"/>
</dbReference>
<dbReference type="GO" id="GO:0051537">
    <property type="term" value="F:2 iron, 2 sulfur cluster binding"/>
    <property type="evidence" value="ECO:0007669"/>
    <property type="project" value="UniProtKB-UniRule"/>
</dbReference>
<dbReference type="GO" id="GO:0051539">
    <property type="term" value="F:4 iron, 4 sulfur cluster binding"/>
    <property type="evidence" value="ECO:0007669"/>
    <property type="project" value="UniProtKB-KW"/>
</dbReference>
<dbReference type="GO" id="GO:0009055">
    <property type="term" value="F:electron transfer activity"/>
    <property type="evidence" value="ECO:0007669"/>
    <property type="project" value="UniProtKB-UniRule"/>
</dbReference>
<dbReference type="GO" id="GO:0046872">
    <property type="term" value="F:metal ion binding"/>
    <property type="evidence" value="ECO:0007669"/>
    <property type="project" value="UniProtKB-KW"/>
</dbReference>
<dbReference type="GO" id="GO:0016226">
    <property type="term" value="P:iron-sulfur cluster assembly"/>
    <property type="evidence" value="ECO:0007669"/>
    <property type="project" value="UniProtKB-UniRule"/>
</dbReference>
<dbReference type="Gene3D" id="3.40.50.11000">
    <property type="entry name" value="Fe-S cluster assembly protein Dre2, N-terminal domain"/>
    <property type="match status" value="1"/>
</dbReference>
<dbReference type="HAMAP" id="MF_03115">
    <property type="entry name" value="Anamorsin"/>
    <property type="match status" value="1"/>
</dbReference>
<dbReference type="InterPro" id="IPR007785">
    <property type="entry name" value="Anamorsin"/>
</dbReference>
<dbReference type="InterPro" id="IPR046408">
    <property type="entry name" value="CIAPIN1"/>
</dbReference>
<dbReference type="InterPro" id="IPR031838">
    <property type="entry name" value="Dre2_N"/>
</dbReference>
<dbReference type="PANTHER" id="PTHR13273">
    <property type="entry name" value="ANAMORSIN"/>
    <property type="match status" value="1"/>
</dbReference>
<dbReference type="PANTHER" id="PTHR13273:SF14">
    <property type="entry name" value="ANAMORSIN"/>
    <property type="match status" value="1"/>
</dbReference>
<dbReference type="Pfam" id="PF05093">
    <property type="entry name" value="CIAPIN1"/>
    <property type="match status" value="1"/>
</dbReference>
<dbReference type="Pfam" id="PF16803">
    <property type="entry name" value="DRE2_N"/>
    <property type="match status" value="1"/>
</dbReference>
<name>DRE2_AJECH</name>
<feature type="chain" id="PRO_0000392374" description="Fe-S cluster assembly protein DRE2">
    <location>
        <begin position="1"/>
        <end position="351"/>
    </location>
</feature>
<feature type="region of interest" description="N-terminal SAM-like domain" evidence="1">
    <location>
        <begin position="1"/>
        <end position="151"/>
    </location>
</feature>
<feature type="region of interest" description="Disordered" evidence="2">
    <location>
        <begin position="93"/>
        <end position="118"/>
    </location>
</feature>
<feature type="region of interest" description="Linker" evidence="1">
    <location>
        <begin position="152"/>
        <end position="243"/>
    </location>
</feature>
<feature type="region of interest" description="Fe-S binding site A" evidence="1">
    <location>
        <begin position="253"/>
        <end position="269"/>
    </location>
</feature>
<feature type="region of interest" description="Fe-S binding site B" evidence="1">
    <location>
        <begin position="314"/>
        <end position="328"/>
    </location>
</feature>
<feature type="short sequence motif" description="Cx2C motif 1" evidence="1">
    <location>
        <begin position="314"/>
        <end position="317"/>
    </location>
</feature>
<feature type="short sequence motif" description="Cx2C motif 2" evidence="1">
    <location>
        <begin position="325"/>
        <end position="328"/>
    </location>
</feature>
<feature type="compositionally biased region" description="Polar residues" evidence="2">
    <location>
        <begin position="105"/>
        <end position="114"/>
    </location>
</feature>
<feature type="binding site" evidence="1">
    <location>
        <position position="253"/>
    </location>
    <ligand>
        <name>[2Fe-2S] cluster</name>
        <dbReference type="ChEBI" id="CHEBI:190135"/>
    </ligand>
</feature>
<feature type="binding site" evidence="1">
    <location>
        <position position="264"/>
    </location>
    <ligand>
        <name>[2Fe-2S] cluster</name>
        <dbReference type="ChEBI" id="CHEBI:190135"/>
    </ligand>
</feature>
<feature type="binding site" evidence="1">
    <location>
        <position position="267"/>
    </location>
    <ligand>
        <name>[2Fe-2S] cluster</name>
        <dbReference type="ChEBI" id="CHEBI:190135"/>
    </ligand>
</feature>
<feature type="binding site" evidence="1">
    <location>
        <position position="269"/>
    </location>
    <ligand>
        <name>[2Fe-2S] cluster</name>
        <dbReference type="ChEBI" id="CHEBI:190135"/>
    </ligand>
</feature>
<feature type="binding site" evidence="1">
    <location>
        <position position="314"/>
    </location>
    <ligand>
        <name>[4Fe-4S] cluster</name>
        <dbReference type="ChEBI" id="CHEBI:49883"/>
    </ligand>
</feature>
<feature type="binding site" evidence="1">
    <location>
        <position position="317"/>
    </location>
    <ligand>
        <name>[4Fe-4S] cluster</name>
        <dbReference type="ChEBI" id="CHEBI:49883"/>
    </ligand>
</feature>
<feature type="binding site" evidence="1">
    <location>
        <position position="325"/>
    </location>
    <ligand>
        <name>[4Fe-4S] cluster</name>
        <dbReference type="ChEBI" id="CHEBI:49883"/>
    </ligand>
</feature>
<feature type="binding site" evidence="1">
    <location>
        <position position="328"/>
    </location>
    <ligand>
        <name>[4Fe-4S] cluster</name>
        <dbReference type="ChEBI" id="CHEBI:49883"/>
    </ligand>
</feature>
<accession>C6HQ96</accession>
<comment type="function">
    <text evidence="1">Component of the cytosolic iron-sulfur (Fe-S) protein assembly (CIA) machinery required for the maturation of extramitochondrial Fe-S proteins. Part of an electron transfer chain functioning in an early step of cytosolic Fe-S biogenesis, facilitating the de novo assembly of a [4Fe-4S] cluster on the scaffold complex CFD1-NBP35. Electrons are transferred to DRE2 from NADPH via the FAD- and FMN-containing protein TAH18. TAH18-DRE2 are also required for the assembly of the diferric tyrosyl radical cofactor of ribonucleotide reductase (RNR), probably by providing electrons for reduction during radical cofactor maturation in the catalytic small subunit RNR2.</text>
</comment>
<comment type="cofactor">
    <cofactor evidence="1">
        <name>[2Fe-2S] cluster</name>
        <dbReference type="ChEBI" id="CHEBI:190135"/>
    </cofactor>
</comment>
<comment type="cofactor">
    <cofactor evidence="1">
        <name>[4Fe-4S] cluster</name>
        <dbReference type="ChEBI" id="CHEBI:49883"/>
    </cofactor>
</comment>
<comment type="subunit">
    <text evidence="1">Monomer. Interacts with TAH18. Interacts with MIA40.</text>
</comment>
<comment type="subcellular location">
    <subcellularLocation>
        <location evidence="1">Cytoplasm</location>
    </subcellularLocation>
    <subcellularLocation>
        <location evidence="1">Mitochondrion intermembrane space</location>
    </subcellularLocation>
</comment>
<comment type="domain">
    <text evidence="1">The C-terminal domain binds 2 Fe-S clusters but is otherwise mostly in an intrinsically disordered conformation.</text>
</comment>
<comment type="domain">
    <text evidence="1">The N-terminal domain has structural similarity with S-adenosyl-L-methionine-dependent methyltransferases, but does not bind S-adenosyl-L-methionine. It is required for correct assembly of the 2 Fe-S clusters.</text>
</comment>
<comment type="domain">
    <text evidence="1">The twin Cx2C motifs are involved in the recognition by the mitochondrial MIA40-ERV1 disulfide relay system. The formation of 2 disulfide bonds in the Cx2C motifs through dithiol/disulfide exchange reactions effectively traps the protein in the mitochondrial intermembrane space.</text>
</comment>
<comment type="similarity">
    <text evidence="1">Belongs to the anamorsin family.</text>
</comment>
<proteinExistence type="inferred from homology"/>
<keyword id="KW-0001">2Fe-2S</keyword>
<keyword id="KW-0004">4Fe-4S</keyword>
<keyword id="KW-0963">Cytoplasm</keyword>
<keyword id="KW-0408">Iron</keyword>
<keyword id="KW-0411">Iron-sulfur</keyword>
<keyword id="KW-0479">Metal-binding</keyword>
<keyword id="KW-0496">Mitochondrion</keyword>
<keyword id="KW-1185">Reference proteome</keyword>
<protein>
    <recommendedName>
        <fullName evidence="1">Fe-S cluster assembly protein DRE2</fullName>
    </recommendedName>
    <alternativeName>
        <fullName evidence="1">Anamorsin homolog</fullName>
    </alternativeName>
</protein>
<reference key="1">
    <citation type="submission" date="2009-05" db="EMBL/GenBank/DDBJ databases">
        <title>The genome sequence of Ajellomyces capsulatus strain H143.</title>
        <authorList>
            <person name="Champion M."/>
            <person name="Cuomo C.A."/>
            <person name="Ma L.-J."/>
            <person name="Henn M.R."/>
            <person name="Sil A."/>
            <person name="Goldman B."/>
            <person name="Young S.K."/>
            <person name="Kodira C.D."/>
            <person name="Zeng Q."/>
            <person name="Koehrsen M."/>
            <person name="Alvarado L."/>
            <person name="Berlin A.M."/>
            <person name="Borenstein D."/>
            <person name="Chen Z."/>
            <person name="Engels R."/>
            <person name="Freedman E."/>
            <person name="Gellesch M."/>
            <person name="Goldberg J."/>
            <person name="Griggs A."/>
            <person name="Gujja S."/>
            <person name="Heiman D.I."/>
            <person name="Hepburn T.A."/>
            <person name="Howarth C."/>
            <person name="Jen D."/>
            <person name="Larson L."/>
            <person name="Lewis B."/>
            <person name="Mehta T."/>
            <person name="Park D."/>
            <person name="Pearson M."/>
            <person name="Roberts A."/>
            <person name="Saif S."/>
            <person name="Shea T.D."/>
            <person name="Shenoy N."/>
            <person name="Sisk P."/>
            <person name="Stolte C."/>
            <person name="Sykes S."/>
            <person name="Walk T."/>
            <person name="White J."/>
            <person name="Yandava C."/>
            <person name="Klein B."/>
            <person name="McEwen J.G."/>
            <person name="Puccia R."/>
            <person name="Goldman G.H."/>
            <person name="Felipe M.S."/>
            <person name="Nino-Vega G."/>
            <person name="San-Blas G."/>
            <person name="Taylor J.W."/>
            <person name="Mendoza L."/>
            <person name="Galagan J.E."/>
            <person name="Nusbaum C."/>
            <person name="Birren B.W."/>
        </authorList>
    </citation>
    <scope>NUCLEOTIDE SEQUENCE [LARGE SCALE GENOMIC DNA]</scope>
    <source>
        <strain>H143</strain>
    </source>
</reference>
<organism>
    <name type="scientific">Ajellomyces capsulatus (strain H143)</name>
    <name type="common">Darling's disease fungus</name>
    <name type="synonym">Histoplasma capsulatum</name>
    <dbReference type="NCBI Taxonomy" id="544712"/>
    <lineage>
        <taxon>Eukaryota</taxon>
        <taxon>Fungi</taxon>
        <taxon>Dikarya</taxon>
        <taxon>Ascomycota</taxon>
        <taxon>Pezizomycotina</taxon>
        <taxon>Eurotiomycetes</taxon>
        <taxon>Eurotiomycetidae</taxon>
        <taxon>Onygenales</taxon>
        <taxon>Ajellomycetaceae</taxon>
        <taxon>Histoplasma</taxon>
    </lineage>
</organism>
<gene>
    <name evidence="1" type="primary">DRE2</name>
    <name type="ORF">HCDG_08377</name>
</gene>
<sequence>MATTGRVLLLSPPSLSSHPEKLNTVLKSHTRDKTDLQMLDRLAHGLVSLPESTYDIVLLLTGADNTLAETHSLLNRELIQRVVHSLRPAGKLRNRENKPWGLSDGNGNNANSSRRYNDDEQRFRNEVILAGLVFDDKGELLKPDIGAQQAIPLKLGRRRKEKEKTDTLASSANYITNGTVDAPASNGISAPIPAAKTTENNPVPPGVGFIDFSDDFGMPAEDDLEDSDEELIDEDELLDEDDMGRQIVQPPECRPKPGKRRRACKDCSCGLSQKLEAKDKAQRATADKALETMKLGSSELAEVDFTVQGKVGSCGNCSLGDAFRCDGCPYIGLPAFKQGEEVRLLNNDVQL</sequence>
<evidence type="ECO:0000255" key="1">
    <source>
        <dbReference type="HAMAP-Rule" id="MF_03115"/>
    </source>
</evidence>
<evidence type="ECO:0000256" key="2">
    <source>
        <dbReference type="SAM" id="MobiDB-lite"/>
    </source>
</evidence>